<reference key="1">
    <citation type="journal article" date="2004" name="Proc. Natl. Acad. Sci. U.S.A.">
        <title>Complete genomes of two clinical Staphylococcus aureus strains: evidence for the rapid evolution of virulence and drug resistance.</title>
        <authorList>
            <person name="Holden M.T.G."/>
            <person name="Feil E.J."/>
            <person name="Lindsay J.A."/>
            <person name="Peacock S.J."/>
            <person name="Day N.P.J."/>
            <person name="Enright M.C."/>
            <person name="Foster T.J."/>
            <person name="Moore C.E."/>
            <person name="Hurst L."/>
            <person name="Atkin R."/>
            <person name="Barron A."/>
            <person name="Bason N."/>
            <person name="Bentley S.D."/>
            <person name="Chillingworth C."/>
            <person name="Chillingworth T."/>
            <person name="Churcher C."/>
            <person name="Clark L."/>
            <person name="Corton C."/>
            <person name="Cronin A."/>
            <person name="Doggett J."/>
            <person name="Dowd L."/>
            <person name="Feltwell T."/>
            <person name="Hance Z."/>
            <person name="Harris B."/>
            <person name="Hauser H."/>
            <person name="Holroyd S."/>
            <person name="Jagels K."/>
            <person name="James K.D."/>
            <person name="Lennard N."/>
            <person name="Line A."/>
            <person name="Mayes R."/>
            <person name="Moule S."/>
            <person name="Mungall K."/>
            <person name="Ormond D."/>
            <person name="Quail M.A."/>
            <person name="Rabbinowitsch E."/>
            <person name="Rutherford K.M."/>
            <person name="Sanders M."/>
            <person name="Sharp S."/>
            <person name="Simmonds M."/>
            <person name="Stevens K."/>
            <person name="Whitehead S."/>
            <person name="Barrell B.G."/>
            <person name="Spratt B.G."/>
            <person name="Parkhill J."/>
        </authorList>
    </citation>
    <scope>NUCLEOTIDE SEQUENCE [LARGE SCALE GENOMIC DNA]</scope>
    <source>
        <strain>MRSA252</strain>
    </source>
</reference>
<accession>Q6GHJ6</accession>
<keyword id="KW-0143">Chaperone</keyword>
<keyword id="KW-0963">Cytoplasm</keyword>
<keyword id="KW-0690">Ribosome biogenesis</keyword>
<keyword id="KW-0698">rRNA processing</keyword>
<organism>
    <name type="scientific">Staphylococcus aureus (strain MRSA252)</name>
    <dbReference type="NCBI Taxonomy" id="282458"/>
    <lineage>
        <taxon>Bacteria</taxon>
        <taxon>Bacillati</taxon>
        <taxon>Bacillota</taxon>
        <taxon>Bacilli</taxon>
        <taxon>Bacillales</taxon>
        <taxon>Staphylococcaceae</taxon>
        <taxon>Staphylococcus</taxon>
    </lineage>
</organism>
<name>RIMM_STAAR</name>
<dbReference type="EMBL" id="BX571856">
    <property type="protein sequence ID" value="CAG40217.1"/>
    <property type="molecule type" value="Genomic_DNA"/>
</dbReference>
<dbReference type="RefSeq" id="WP_001261982.1">
    <property type="nucleotide sequence ID" value="NC_002952.2"/>
</dbReference>
<dbReference type="SMR" id="Q6GHJ6"/>
<dbReference type="KEGG" id="sar:SAR1215"/>
<dbReference type="HOGENOM" id="CLU_077636_3_1_9"/>
<dbReference type="Proteomes" id="UP000000596">
    <property type="component" value="Chromosome"/>
</dbReference>
<dbReference type="GO" id="GO:0005737">
    <property type="term" value="C:cytoplasm"/>
    <property type="evidence" value="ECO:0007669"/>
    <property type="project" value="UniProtKB-SubCell"/>
</dbReference>
<dbReference type="GO" id="GO:0005840">
    <property type="term" value="C:ribosome"/>
    <property type="evidence" value="ECO:0007669"/>
    <property type="project" value="InterPro"/>
</dbReference>
<dbReference type="GO" id="GO:0043022">
    <property type="term" value="F:ribosome binding"/>
    <property type="evidence" value="ECO:0007669"/>
    <property type="project" value="InterPro"/>
</dbReference>
<dbReference type="GO" id="GO:0042274">
    <property type="term" value="P:ribosomal small subunit biogenesis"/>
    <property type="evidence" value="ECO:0007669"/>
    <property type="project" value="UniProtKB-UniRule"/>
</dbReference>
<dbReference type="GO" id="GO:0006364">
    <property type="term" value="P:rRNA processing"/>
    <property type="evidence" value="ECO:0007669"/>
    <property type="project" value="UniProtKB-UniRule"/>
</dbReference>
<dbReference type="Gene3D" id="2.30.30.240">
    <property type="entry name" value="PRC-barrel domain"/>
    <property type="match status" value="1"/>
</dbReference>
<dbReference type="Gene3D" id="2.40.30.60">
    <property type="entry name" value="RimM"/>
    <property type="match status" value="1"/>
</dbReference>
<dbReference type="HAMAP" id="MF_00014">
    <property type="entry name" value="Ribosome_mat_RimM"/>
    <property type="match status" value="1"/>
</dbReference>
<dbReference type="InterPro" id="IPR011033">
    <property type="entry name" value="PRC_barrel-like_sf"/>
</dbReference>
<dbReference type="InterPro" id="IPR056792">
    <property type="entry name" value="PRC_RimM"/>
</dbReference>
<dbReference type="InterPro" id="IPR011961">
    <property type="entry name" value="RimM"/>
</dbReference>
<dbReference type="InterPro" id="IPR002676">
    <property type="entry name" value="RimM_N"/>
</dbReference>
<dbReference type="InterPro" id="IPR036976">
    <property type="entry name" value="RimM_N_sf"/>
</dbReference>
<dbReference type="InterPro" id="IPR009000">
    <property type="entry name" value="Transl_B-barrel_sf"/>
</dbReference>
<dbReference type="NCBIfam" id="TIGR02273">
    <property type="entry name" value="16S_RimM"/>
    <property type="match status" value="1"/>
</dbReference>
<dbReference type="PANTHER" id="PTHR33692">
    <property type="entry name" value="RIBOSOME MATURATION FACTOR RIMM"/>
    <property type="match status" value="1"/>
</dbReference>
<dbReference type="PANTHER" id="PTHR33692:SF1">
    <property type="entry name" value="RIBOSOME MATURATION FACTOR RIMM"/>
    <property type="match status" value="1"/>
</dbReference>
<dbReference type="Pfam" id="PF24986">
    <property type="entry name" value="PRC_RimM"/>
    <property type="match status" value="1"/>
</dbReference>
<dbReference type="Pfam" id="PF01782">
    <property type="entry name" value="RimM"/>
    <property type="match status" value="1"/>
</dbReference>
<dbReference type="SUPFAM" id="SSF50346">
    <property type="entry name" value="PRC-barrel domain"/>
    <property type="match status" value="1"/>
</dbReference>
<dbReference type="SUPFAM" id="SSF50447">
    <property type="entry name" value="Translation proteins"/>
    <property type="match status" value="1"/>
</dbReference>
<proteinExistence type="inferred from homology"/>
<evidence type="ECO:0000255" key="1">
    <source>
        <dbReference type="HAMAP-Rule" id="MF_00014"/>
    </source>
</evidence>
<feature type="chain" id="PRO_0000163354" description="Ribosome maturation factor RimM">
    <location>
        <begin position="1"/>
        <end position="167"/>
    </location>
</feature>
<feature type="domain" description="PRC barrel" evidence="1">
    <location>
        <begin position="94"/>
        <end position="165"/>
    </location>
</feature>
<protein>
    <recommendedName>
        <fullName evidence="1">Ribosome maturation factor RimM</fullName>
    </recommendedName>
</protein>
<gene>
    <name evidence="1" type="primary">rimM</name>
    <name type="ordered locus">SAR1215</name>
</gene>
<sequence>MRVEVGQIVNTHGIKGEIKVKSNSDFTDVRFQPGQVLTVVHNNNDLEYTVKSHRVHKGLHMLTFEGINNINDIEHLKGSSIYQERDHEDIVLEENEFYYSDIIGCTVFDDQETPIGRVINIFETGANDVWVIKESKEYLIPYIADVVKEVDVENKKIIITPMEGLLD</sequence>
<comment type="function">
    <text evidence="1">An accessory protein needed during the final step in the assembly of 30S ribosomal subunit, possibly for assembly of the head region. Essential for efficient processing of 16S rRNA. May be needed both before and after RbfA during the maturation of 16S rRNA. It has affinity for free ribosomal 30S subunits but not for 70S ribosomes.</text>
</comment>
<comment type="subunit">
    <text evidence="1">Binds ribosomal protein uS19.</text>
</comment>
<comment type="subcellular location">
    <subcellularLocation>
        <location evidence="1">Cytoplasm</location>
    </subcellularLocation>
</comment>
<comment type="domain">
    <text evidence="1">The PRC barrel domain binds ribosomal protein uS19.</text>
</comment>
<comment type="similarity">
    <text evidence="1">Belongs to the RimM family.</text>
</comment>